<proteinExistence type="inferred from homology"/>
<keyword id="KW-0963">Cytoplasm</keyword>
<keyword id="KW-1185">Reference proteome</keyword>
<sequence>MALEMTQRQGIVVWLYSLRQVKQLRRYGLVYYTSKRMKYVYLYVDADQAPAVIERLKKLHYVKRVTRSQRPMLDMEFGALAELANQETATKAALKE</sequence>
<reference key="1">
    <citation type="journal article" date="2005" name="Nat. Biotechnol.">
        <title>The complete genome sequence of the meat-borne lactic acid bacterium Lactobacillus sakei 23K.</title>
        <authorList>
            <person name="Chaillou S."/>
            <person name="Champomier-Verges M.-C."/>
            <person name="Cornet M."/>
            <person name="Crutz-Le Coq A.-M."/>
            <person name="Dudez A.-M."/>
            <person name="Martin V."/>
            <person name="Beaufils S."/>
            <person name="Darbon-Rongere E."/>
            <person name="Bossy R."/>
            <person name="Loux V."/>
            <person name="Zagorec M."/>
        </authorList>
    </citation>
    <scope>NUCLEOTIDE SEQUENCE [LARGE SCALE GENOMIC DNA]</scope>
    <source>
        <strain>23K</strain>
    </source>
</reference>
<accession>Q38WQ5</accession>
<dbReference type="EMBL" id="CR936503">
    <property type="protein sequence ID" value="CAI55376.1"/>
    <property type="molecule type" value="Genomic_DNA"/>
</dbReference>
<dbReference type="RefSeq" id="WP_011374775.1">
    <property type="nucleotide sequence ID" value="NC_007576.1"/>
</dbReference>
<dbReference type="SMR" id="Q38WQ5"/>
<dbReference type="STRING" id="314315.LCA_1075"/>
<dbReference type="KEGG" id="lsa:LCA_1075"/>
<dbReference type="eggNOG" id="COG4471">
    <property type="taxonomic scope" value="Bacteria"/>
</dbReference>
<dbReference type="HOGENOM" id="CLU_159890_0_1_9"/>
<dbReference type="OrthoDB" id="2990788at2"/>
<dbReference type="Proteomes" id="UP000002707">
    <property type="component" value="Chromosome"/>
</dbReference>
<dbReference type="GO" id="GO:0005737">
    <property type="term" value="C:cytoplasm"/>
    <property type="evidence" value="ECO:0007669"/>
    <property type="project" value="UniProtKB-SubCell"/>
</dbReference>
<dbReference type="HAMAP" id="MF_01126">
    <property type="entry name" value="UPF0298"/>
    <property type="match status" value="1"/>
</dbReference>
<dbReference type="InterPro" id="IPR016979">
    <property type="entry name" value="DUF2129"/>
</dbReference>
<dbReference type="Pfam" id="PF09902">
    <property type="entry name" value="DUF2129"/>
    <property type="match status" value="1"/>
</dbReference>
<dbReference type="PIRSF" id="PIRSF031653">
    <property type="entry name" value="UCP031653"/>
    <property type="match status" value="1"/>
</dbReference>
<name>Y1075_LATSS</name>
<protein>
    <recommendedName>
        <fullName evidence="1">UPF0298 protein LCA_1075</fullName>
    </recommendedName>
</protein>
<comment type="subcellular location">
    <subcellularLocation>
        <location evidence="1">Cytoplasm</location>
    </subcellularLocation>
</comment>
<comment type="similarity">
    <text evidence="1">Belongs to the UPF0298 family.</text>
</comment>
<gene>
    <name type="ordered locus">LCA_1075</name>
</gene>
<organism>
    <name type="scientific">Latilactobacillus sakei subsp. sakei (strain 23K)</name>
    <name type="common">Lactobacillus sakei subsp. sakei</name>
    <dbReference type="NCBI Taxonomy" id="314315"/>
    <lineage>
        <taxon>Bacteria</taxon>
        <taxon>Bacillati</taxon>
        <taxon>Bacillota</taxon>
        <taxon>Bacilli</taxon>
        <taxon>Lactobacillales</taxon>
        <taxon>Lactobacillaceae</taxon>
        <taxon>Latilactobacillus</taxon>
    </lineage>
</organism>
<feature type="chain" id="PRO_1000065361" description="UPF0298 protein LCA_1075">
    <location>
        <begin position="1"/>
        <end position="96"/>
    </location>
</feature>
<evidence type="ECO:0000255" key="1">
    <source>
        <dbReference type="HAMAP-Rule" id="MF_01126"/>
    </source>
</evidence>